<feature type="chain" id="PRO_0000259168" description="Large ribosomal subunit protein bL31">
    <location>
        <begin position="1"/>
        <end position="90"/>
    </location>
</feature>
<feature type="region of interest" description="Disordered" evidence="2">
    <location>
        <begin position="71"/>
        <end position="90"/>
    </location>
</feature>
<feature type="compositionally biased region" description="Basic and acidic residues" evidence="2">
    <location>
        <begin position="81"/>
        <end position="90"/>
    </location>
</feature>
<proteinExistence type="inferred from homology"/>
<dbReference type="EMBL" id="CP000061">
    <property type="protein sequence ID" value="ABC65721.1"/>
    <property type="molecule type" value="Genomic_DNA"/>
</dbReference>
<dbReference type="RefSeq" id="WP_011412883.1">
    <property type="nucleotide sequence ID" value="NC_007716.1"/>
</dbReference>
<dbReference type="STRING" id="322098.AYWB_604"/>
<dbReference type="KEGG" id="ayw:AYWB_604"/>
<dbReference type="eggNOG" id="COG0254">
    <property type="taxonomic scope" value="Bacteria"/>
</dbReference>
<dbReference type="HOGENOM" id="CLU_114306_4_3_14"/>
<dbReference type="OrthoDB" id="9803251at2"/>
<dbReference type="PhylomeDB" id="Q2NIM2"/>
<dbReference type="Proteomes" id="UP000001934">
    <property type="component" value="Chromosome"/>
</dbReference>
<dbReference type="GO" id="GO:1990904">
    <property type="term" value="C:ribonucleoprotein complex"/>
    <property type="evidence" value="ECO:0007669"/>
    <property type="project" value="UniProtKB-KW"/>
</dbReference>
<dbReference type="GO" id="GO:0005840">
    <property type="term" value="C:ribosome"/>
    <property type="evidence" value="ECO:0007669"/>
    <property type="project" value="UniProtKB-KW"/>
</dbReference>
<dbReference type="GO" id="GO:0019843">
    <property type="term" value="F:rRNA binding"/>
    <property type="evidence" value="ECO:0007669"/>
    <property type="project" value="UniProtKB-KW"/>
</dbReference>
<dbReference type="GO" id="GO:0003735">
    <property type="term" value="F:structural constituent of ribosome"/>
    <property type="evidence" value="ECO:0007669"/>
    <property type="project" value="InterPro"/>
</dbReference>
<dbReference type="GO" id="GO:0006412">
    <property type="term" value="P:translation"/>
    <property type="evidence" value="ECO:0007669"/>
    <property type="project" value="InterPro"/>
</dbReference>
<dbReference type="Gene3D" id="4.10.830.30">
    <property type="entry name" value="Ribosomal protein L31"/>
    <property type="match status" value="1"/>
</dbReference>
<dbReference type="InterPro" id="IPR034704">
    <property type="entry name" value="Ribosomal_bL28/bL31-like_sf"/>
</dbReference>
<dbReference type="InterPro" id="IPR002150">
    <property type="entry name" value="Ribosomal_bL31"/>
</dbReference>
<dbReference type="InterPro" id="IPR042105">
    <property type="entry name" value="Ribosomal_bL31_sf"/>
</dbReference>
<dbReference type="NCBIfam" id="TIGR00105">
    <property type="entry name" value="L31"/>
    <property type="match status" value="1"/>
</dbReference>
<dbReference type="NCBIfam" id="NF000612">
    <property type="entry name" value="PRK00019.1"/>
    <property type="match status" value="1"/>
</dbReference>
<dbReference type="PANTHER" id="PTHR33280">
    <property type="entry name" value="50S RIBOSOMAL PROTEIN L31, CHLOROPLASTIC"/>
    <property type="match status" value="1"/>
</dbReference>
<dbReference type="PANTHER" id="PTHR33280:SF1">
    <property type="entry name" value="LARGE RIBOSOMAL SUBUNIT PROTEIN BL31C"/>
    <property type="match status" value="1"/>
</dbReference>
<dbReference type="Pfam" id="PF01197">
    <property type="entry name" value="Ribosomal_L31"/>
    <property type="match status" value="1"/>
</dbReference>
<dbReference type="PRINTS" id="PR01249">
    <property type="entry name" value="RIBOSOMALL31"/>
</dbReference>
<dbReference type="SUPFAM" id="SSF143800">
    <property type="entry name" value="L28p-like"/>
    <property type="match status" value="1"/>
</dbReference>
<name>RL31_AYWBP</name>
<reference key="1">
    <citation type="journal article" date="2006" name="J. Bacteriol.">
        <title>Living with genome instability: the adaptation of phytoplasmas to diverse environments of their insect and plant hosts.</title>
        <authorList>
            <person name="Bai X."/>
            <person name="Zhang J."/>
            <person name="Ewing A."/>
            <person name="Miller S.A."/>
            <person name="Jancso Radek A."/>
            <person name="Shevchenko D.V."/>
            <person name="Tsukerman K."/>
            <person name="Walunas T."/>
            <person name="Lapidus A."/>
            <person name="Campbell J.W."/>
            <person name="Hogenhout S.A."/>
        </authorList>
    </citation>
    <scope>NUCLEOTIDE SEQUENCE [LARGE SCALE GENOMIC DNA]</scope>
    <source>
        <strain>AYWB</strain>
    </source>
</reference>
<evidence type="ECO:0000250" key="1"/>
<evidence type="ECO:0000256" key="2">
    <source>
        <dbReference type="SAM" id="MobiDB-lite"/>
    </source>
</evidence>
<evidence type="ECO:0000305" key="3"/>
<sequence>MKANIHPQFKTVEVSCATCGKQHPIGTTVNSIKIETCSNCHTFYTGVQTFVVKAGPVDKFNKRYGITQDQKVKKFPSNADNQKEPAEEQE</sequence>
<accession>Q2NIM2</accession>
<comment type="function">
    <text evidence="1">Binds the 23S rRNA.</text>
</comment>
<comment type="subunit">
    <text evidence="1">Part of the 50S ribosomal subunit.</text>
</comment>
<comment type="similarity">
    <text evidence="3">Belongs to the bacterial ribosomal protein bL31 family. Type A subfamily.</text>
</comment>
<organism>
    <name type="scientific">Aster yellows witches'-broom phytoplasma (strain AYWB)</name>
    <dbReference type="NCBI Taxonomy" id="322098"/>
    <lineage>
        <taxon>Bacteria</taxon>
        <taxon>Bacillati</taxon>
        <taxon>Mycoplasmatota</taxon>
        <taxon>Mollicutes</taxon>
        <taxon>Acholeplasmatales</taxon>
        <taxon>Acholeplasmataceae</taxon>
        <taxon>Candidatus Phytoplasma</taxon>
        <taxon>16SrI (Aster yellows group)</taxon>
    </lineage>
</organism>
<keyword id="KW-0687">Ribonucleoprotein</keyword>
<keyword id="KW-0689">Ribosomal protein</keyword>
<keyword id="KW-0694">RNA-binding</keyword>
<keyword id="KW-0699">rRNA-binding</keyword>
<gene>
    <name type="primary">rpmE</name>
    <name type="ordered locus">AYWB_604</name>
</gene>
<protein>
    <recommendedName>
        <fullName evidence="3">Large ribosomal subunit protein bL31</fullName>
    </recommendedName>
    <alternativeName>
        <fullName>50S ribosomal protein L31</fullName>
    </alternativeName>
</protein>